<gene>
    <name evidence="2" type="primary">rpsL</name>
    <name type="ordered locus">PXO_04528</name>
</gene>
<sequence length="124" mass="13753">MTTINQLVRKPRQATTYKSASPALDKCPQRRGVCTRVYTTTPKKPNSALRKVAKVRLTNQEEVISYIGGEGHNLQEHSVVLIRGGRVKDLPGVRYHTVRGSLDAAGVAKRRQGRSKYGAKRPKS</sequence>
<protein>
    <recommendedName>
        <fullName evidence="2">Small ribosomal subunit protein uS12</fullName>
    </recommendedName>
    <alternativeName>
        <fullName evidence="4">30S ribosomal protein S12</fullName>
    </alternativeName>
</protein>
<dbReference type="EMBL" id="CP000967">
    <property type="protein sequence ID" value="ACD57880.1"/>
    <property type="molecule type" value="Genomic_DNA"/>
</dbReference>
<dbReference type="RefSeq" id="WP_002811712.1">
    <property type="nucleotide sequence ID" value="NC_010717.2"/>
</dbReference>
<dbReference type="SMR" id="B2SQQ3"/>
<dbReference type="GeneID" id="97509330"/>
<dbReference type="KEGG" id="xop:PXO_04528"/>
<dbReference type="eggNOG" id="COG0048">
    <property type="taxonomic scope" value="Bacteria"/>
</dbReference>
<dbReference type="HOGENOM" id="CLU_104295_1_2_6"/>
<dbReference type="Proteomes" id="UP000001740">
    <property type="component" value="Chromosome"/>
</dbReference>
<dbReference type="GO" id="GO:0015935">
    <property type="term" value="C:small ribosomal subunit"/>
    <property type="evidence" value="ECO:0007669"/>
    <property type="project" value="InterPro"/>
</dbReference>
<dbReference type="GO" id="GO:0019843">
    <property type="term" value="F:rRNA binding"/>
    <property type="evidence" value="ECO:0007669"/>
    <property type="project" value="UniProtKB-UniRule"/>
</dbReference>
<dbReference type="GO" id="GO:0003735">
    <property type="term" value="F:structural constituent of ribosome"/>
    <property type="evidence" value="ECO:0007669"/>
    <property type="project" value="InterPro"/>
</dbReference>
<dbReference type="GO" id="GO:0000049">
    <property type="term" value="F:tRNA binding"/>
    <property type="evidence" value="ECO:0007669"/>
    <property type="project" value="UniProtKB-UniRule"/>
</dbReference>
<dbReference type="GO" id="GO:0006412">
    <property type="term" value="P:translation"/>
    <property type="evidence" value="ECO:0007669"/>
    <property type="project" value="UniProtKB-UniRule"/>
</dbReference>
<dbReference type="CDD" id="cd03368">
    <property type="entry name" value="Ribosomal_S12"/>
    <property type="match status" value="1"/>
</dbReference>
<dbReference type="FunFam" id="2.40.50.140:FF:000001">
    <property type="entry name" value="30S ribosomal protein S12"/>
    <property type="match status" value="1"/>
</dbReference>
<dbReference type="Gene3D" id="2.40.50.140">
    <property type="entry name" value="Nucleic acid-binding proteins"/>
    <property type="match status" value="1"/>
</dbReference>
<dbReference type="HAMAP" id="MF_00403_B">
    <property type="entry name" value="Ribosomal_uS12_B"/>
    <property type="match status" value="1"/>
</dbReference>
<dbReference type="InterPro" id="IPR012340">
    <property type="entry name" value="NA-bd_OB-fold"/>
</dbReference>
<dbReference type="InterPro" id="IPR006032">
    <property type="entry name" value="Ribosomal_uS12"/>
</dbReference>
<dbReference type="InterPro" id="IPR005679">
    <property type="entry name" value="Ribosomal_uS12_bac"/>
</dbReference>
<dbReference type="NCBIfam" id="TIGR00981">
    <property type="entry name" value="rpsL_bact"/>
    <property type="match status" value="1"/>
</dbReference>
<dbReference type="PANTHER" id="PTHR11652">
    <property type="entry name" value="30S RIBOSOMAL PROTEIN S12 FAMILY MEMBER"/>
    <property type="match status" value="1"/>
</dbReference>
<dbReference type="Pfam" id="PF00164">
    <property type="entry name" value="Ribosom_S12_S23"/>
    <property type="match status" value="1"/>
</dbReference>
<dbReference type="PIRSF" id="PIRSF002133">
    <property type="entry name" value="Ribosomal_S12/S23"/>
    <property type="match status" value="1"/>
</dbReference>
<dbReference type="PRINTS" id="PR01034">
    <property type="entry name" value="RIBOSOMALS12"/>
</dbReference>
<dbReference type="SUPFAM" id="SSF50249">
    <property type="entry name" value="Nucleic acid-binding proteins"/>
    <property type="match status" value="1"/>
</dbReference>
<dbReference type="PROSITE" id="PS00055">
    <property type="entry name" value="RIBOSOMAL_S12"/>
    <property type="match status" value="1"/>
</dbReference>
<reference key="1">
    <citation type="journal article" date="2008" name="BMC Genomics">
        <title>Genome sequence and rapid evolution of the rice pathogen Xanthomonas oryzae pv. oryzae PXO99A.</title>
        <authorList>
            <person name="Salzberg S.L."/>
            <person name="Sommer D.D."/>
            <person name="Schatz M.C."/>
            <person name="Phillippy A.M."/>
            <person name="Rabinowicz P.D."/>
            <person name="Tsuge S."/>
            <person name="Furutani A."/>
            <person name="Ochiai H."/>
            <person name="Delcher A.L."/>
            <person name="Kelley D."/>
            <person name="Madupu R."/>
            <person name="Puiu D."/>
            <person name="Radune D."/>
            <person name="Shumway M."/>
            <person name="Trapnell C."/>
            <person name="Aparna G."/>
            <person name="Jha G."/>
            <person name="Pandey A."/>
            <person name="Patil P.B."/>
            <person name="Ishihara H."/>
            <person name="Meyer D.F."/>
            <person name="Szurek B."/>
            <person name="Verdier V."/>
            <person name="Koebnik R."/>
            <person name="Dow J.M."/>
            <person name="Ryan R.P."/>
            <person name="Hirata H."/>
            <person name="Tsuyumu S."/>
            <person name="Won Lee S."/>
            <person name="Seo Y.-S."/>
            <person name="Sriariyanum M."/>
            <person name="Ronald P.C."/>
            <person name="Sonti R.V."/>
            <person name="Van Sluys M.-A."/>
            <person name="Leach J.E."/>
            <person name="White F.F."/>
            <person name="Bogdanove A.J."/>
        </authorList>
    </citation>
    <scope>NUCLEOTIDE SEQUENCE [LARGE SCALE GENOMIC DNA]</scope>
    <source>
        <strain>PXO99A</strain>
    </source>
</reference>
<keyword id="KW-0488">Methylation</keyword>
<keyword id="KW-0687">Ribonucleoprotein</keyword>
<keyword id="KW-0689">Ribosomal protein</keyword>
<keyword id="KW-0694">RNA-binding</keyword>
<keyword id="KW-0699">rRNA-binding</keyword>
<keyword id="KW-0820">tRNA-binding</keyword>
<evidence type="ECO:0000250" key="1"/>
<evidence type="ECO:0000255" key="2">
    <source>
        <dbReference type="HAMAP-Rule" id="MF_00403"/>
    </source>
</evidence>
<evidence type="ECO:0000256" key="3">
    <source>
        <dbReference type="SAM" id="MobiDB-lite"/>
    </source>
</evidence>
<evidence type="ECO:0000305" key="4"/>
<comment type="function">
    <text evidence="2">With S4 and S5 plays an important role in translational accuracy.</text>
</comment>
<comment type="function">
    <text evidence="2">Interacts with and stabilizes bases of the 16S rRNA that are involved in tRNA selection in the A site and with the mRNA backbone. Located at the interface of the 30S and 50S subunits, it traverses the body of the 30S subunit contacting proteins on the other side and probably holding the rRNA structure together. The combined cluster of proteins S8, S12 and S17 appears to hold together the shoulder and platform of the 30S subunit.</text>
</comment>
<comment type="subunit">
    <text evidence="2">Part of the 30S ribosomal subunit. Contacts proteins S8 and S17. May interact with IF1 in the 30S initiation complex.</text>
</comment>
<comment type="similarity">
    <text evidence="2">Belongs to the universal ribosomal protein uS12 family.</text>
</comment>
<name>RS12_XANOP</name>
<accession>B2SQQ3</accession>
<feature type="chain" id="PRO_1000123538" description="Small ribosomal subunit protein uS12">
    <location>
        <begin position="1"/>
        <end position="124"/>
    </location>
</feature>
<feature type="region of interest" description="Disordered" evidence="3">
    <location>
        <begin position="1"/>
        <end position="24"/>
    </location>
</feature>
<feature type="modified residue" description="3-methylthioaspartic acid" evidence="1">
    <location>
        <position position="89"/>
    </location>
</feature>
<organism>
    <name type="scientific">Xanthomonas oryzae pv. oryzae (strain PXO99A)</name>
    <dbReference type="NCBI Taxonomy" id="360094"/>
    <lineage>
        <taxon>Bacteria</taxon>
        <taxon>Pseudomonadati</taxon>
        <taxon>Pseudomonadota</taxon>
        <taxon>Gammaproteobacteria</taxon>
        <taxon>Lysobacterales</taxon>
        <taxon>Lysobacteraceae</taxon>
        <taxon>Xanthomonas</taxon>
    </lineage>
</organism>
<proteinExistence type="inferred from homology"/>